<dbReference type="EMBL" id="AL589883">
    <property type="protein sequence ID" value="CAC34494.1"/>
    <property type="molecule type" value="Genomic_DNA"/>
</dbReference>
<dbReference type="EMBL" id="CP002688">
    <property type="protein sequence ID" value="AED92968.1"/>
    <property type="molecule type" value="Genomic_DNA"/>
</dbReference>
<dbReference type="EMBL" id="BT014965">
    <property type="protein sequence ID" value="AAT47816.1"/>
    <property type="molecule type" value="mRNA"/>
</dbReference>
<dbReference type="RefSeq" id="NP_680188.1">
    <property type="nucleotide sequence ID" value="NM_147883.6"/>
</dbReference>
<dbReference type="SMR" id="Q9C587"/>
<dbReference type="FunCoup" id="Q9C587">
    <property type="interactions" value="4196"/>
</dbReference>
<dbReference type="STRING" id="3702.Q9C587"/>
<dbReference type="iPTMnet" id="Q9C587"/>
<dbReference type="PaxDb" id="3702-AT5G22010.1"/>
<dbReference type="ProteomicsDB" id="236216"/>
<dbReference type="EnsemblPlants" id="AT5G22010.1">
    <property type="protein sequence ID" value="AT5G22010.1"/>
    <property type="gene ID" value="AT5G22010"/>
</dbReference>
<dbReference type="GeneID" id="832261"/>
<dbReference type="Gramene" id="AT5G22010.1">
    <property type="protein sequence ID" value="AT5G22010.1"/>
    <property type="gene ID" value="AT5G22010"/>
</dbReference>
<dbReference type="KEGG" id="ath:AT5G22010"/>
<dbReference type="Araport" id="AT5G22010"/>
<dbReference type="TAIR" id="AT5G22010">
    <property type="gene designation" value="RFC1"/>
</dbReference>
<dbReference type="eggNOG" id="KOG1968">
    <property type="taxonomic scope" value="Eukaryota"/>
</dbReference>
<dbReference type="HOGENOM" id="CLU_003574_4_0_1"/>
<dbReference type="InParanoid" id="Q9C587"/>
<dbReference type="OMA" id="LICNERN"/>
<dbReference type="PhylomeDB" id="Q9C587"/>
<dbReference type="CD-CODE" id="4299E36E">
    <property type="entry name" value="Nucleolus"/>
</dbReference>
<dbReference type="PRO" id="PR:Q9C587"/>
<dbReference type="Proteomes" id="UP000006548">
    <property type="component" value="Chromosome 5"/>
</dbReference>
<dbReference type="ExpressionAtlas" id="Q9C587">
    <property type="expression patterns" value="baseline and differential"/>
</dbReference>
<dbReference type="GO" id="GO:0005663">
    <property type="term" value="C:DNA replication factor C complex"/>
    <property type="evidence" value="ECO:0007669"/>
    <property type="project" value="InterPro"/>
</dbReference>
<dbReference type="GO" id="GO:0005634">
    <property type="term" value="C:nucleus"/>
    <property type="evidence" value="ECO:0007669"/>
    <property type="project" value="UniProtKB-SubCell"/>
</dbReference>
<dbReference type="GO" id="GO:0005524">
    <property type="term" value="F:ATP binding"/>
    <property type="evidence" value="ECO:0007669"/>
    <property type="project" value="UniProtKB-KW"/>
</dbReference>
<dbReference type="GO" id="GO:0016887">
    <property type="term" value="F:ATP hydrolysis activity"/>
    <property type="evidence" value="ECO:0007669"/>
    <property type="project" value="InterPro"/>
</dbReference>
<dbReference type="GO" id="GO:0003677">
    <property type="term" value="F:DNA binding"/>
    <property type="evidence" value="ECO:0007669"/>
    <property type="project" value="UniProtKB-KW"/>
</dbReference>
<dbReference type="GO" id="GO:0003689">
    <property type="term" value="F:DNA clamp loader activity"/>
    <property type="evidence" value="ECO:0007669"/>
    <property type="project" value="InterPro"/>
</dbReference>
<dbReference type="GO" id="GO:0006974">
    <property type="term" value="P:DNA damage response"/>
    <property type="evidence" value="ECO:0000315"/>
    <property type="project" value="TAIR"/>
</dbReference>
<dbReference type="GO" id="GO:0006281">
    <property type="term" value="P:DNA repair"/>
    <property type="evidence" value="ECO:0007669"/>
    <property type="project" value="UniProtKB-KW"/>
</dbReference>
<dbReference type="GO" id="GO:0006260">
    <property type="term" value="P:DNA replication"/>
    <property type="evidence" value="ECO:0007669"/>
    <property type="project" value="UniProtKB-KW"/>
</dbReference>
<dbReference type="GO" id="GO:0051321">
    <property type="term" value="P:meiotic cell cycle"/>
    <property type="evidence" value="ECO:0000315"/>
    <property type="project" value="TAIR"/>
</dbReference>
<dbReference type="GO" id="GO:0000712">
    <property type="term" value="P:resolution of meiotic recombination intermediates"/>
    <property type="evidence" value="ECO:0000315"/>
    <property type="project" value="TAIR"/>
</dbReference>
<dbReference type="CDD" id="cd00009">
    <property type="entry name" value="AAA"/>
    <property type="match status" value="1"/>
</dbReference>
<dbReference type="CDD" id="cd17752">
    <property type="entry name" value="BRCT_RFC1"/>
    <property type="match status" value="1"/>
</dbReference>
<dbReference type="CDD" id="cd18140">
    <property type="entry name" value="HLD_clamp_RFC"/>
    <property type="match status" value="1"/>
</dbReference>
<dbReference type="FunFam" id="1.10.8.60:FF:000021">
    <property type="entry name" value="Replication factor C subunit 1"/>
    <property type="match status" value="1"/>
</dbReference>
<dbReference type="FunFam" id="1.20.272.10:FF:000013">
    <property type="entry name" value="Replication factor C subunit 1"/>
    <property type="match status" value="1"/>
</dbReference>
<dbReference type="FunFam" id="3.40.50.10190:FF:000001">
    <property type="entry name" value="Replication factor C subunit 1"/>
    <property type="match status" value="1"/>
</dbReference>
<dbReference type="FunFam" id="3.40.50.300:FF:000773">
    <property type="entry name" value="Replication factor C subunit 1"/>
    <property type="match status" value="1"/>
</dbReference>
<dbReference type="Gene3D" id="1.10.8.60">
    <property type="match status" value="1"/>
</dbReference>
<dbReference type="Gene3D" id="1.20.272.10">
    <property type="match status" value="1"/>
</dbReference>
<dbReference type="Gene3D" id="3.40.50.10190">
    <property type="entry name" value="BRCT domain"/>
    <property type="match status" value="1"/>
</dbReference>
<dbReference type="Gene3D" id="3.40.50.300">
    <property type="entry name" value="P-loop containing nucleotide triphosphate hydrolases"/>
    <property type="match status" value="1"/>
</dbReference>
<dbReference type="InterPro" id="IPR003593">
    <property type="entry name" value="AAA+_ATPase"/>
</dbReference>
<dbReference type="InterPro" id="IPR003959">
    <property type="entry name" value="ATPase_AAA_core"/>
</dbReference>
<dbReference type="InterPro" id="IPR001357">
    <property type="entry name" value="BRCT_dom"/>
</dbReference>
<dbReference type="InterPro" id="IPR036420">
    <property type="entry name" value="BRCT_dom_sf"/>
</dbReference>
<dbReference type="InterPro" id="IPR008921">
    <property type="entry name" value="DNA_pol3_clamp-load_cplx_C"/>
</dbReference>
<dbReference type="InterPro" id="IPR013725">
    <property type="entry name" value="DNA_replication_fac_RFC1_C"/>
</dbReference>
<dbReference type="InterPro" id="IPR027417">
    <property type="entry name" value="P-loop_NTPase"/>
</dbReference>
<dbReference type="InterPro" id="IPR012178">
    <property type="entry name" value="RFC1"/>
</dbReference>
<dbReference type="InterPro" id="IPR047854">
    <property type="entry name" value="RFC_lid"/>
</dbReference>
<dbReference type="PANTHER" id="PTHR23389">
    <property type="entry name" value="CHROMOSOME TRANSMISSION FIDELITY FACTOR 18"/>
    <property type="match status" value="1"/>
</dbReference>
<dbReference type="PANTHER" id="PTHR23389:SF6">
    <property type="entry name" value="REPLICATION FACTOR C SUBUNIT 1"/>
    <property type="match status" value="1"/>
</dbReference>
<dbReference type="Pfam" id="PF00004">
    <property type="entry name" value="AAA"/>
    <property type="match status" value="1"/>
</dbReference>
<dbReference type="Pfam" id="PF25361">
    <property type="entry name" value="AAA_lid_RFC1"/>
    <property type="match status" value="1"/>
</dbReference>
<dbReference type="Pfam" id="PF00533">
    <property type="entry name" value="BRCT"/>
    <property type="match status" value="1"/>
</dbReference>
<dbReference type="Pfam" id="PF08519">
    <property type="entry name" value="RFC1"/>
    <property type="match status" value="1"/>
</dbReference>
<dbReference type="PIRSF" id="PIRSF036578">
    <property type="entry name" value="RFC1"/>
    <property type="match status" value="1"/>
</dbReference>
<dbReference type="SMART" id="SM00382">
    <property type="entry name" value="AAA"/>
    <property type="match status" value="1"/>
</dbReference>
<dbReference type="SMART" id="SM00292">
    <property type="entry name" value="BRCT"/>
    <property type="match status" value="1"/>
</dbReference>
<dbReference type="SUPFAM" id="SSF52113">
    <property type="entry name" value="BRCT domain"/>
    <property type="match status" value="1"/>
</dbReference>
<dbReference type="SUPFAM" id="SSF52540">
    <property type="entry name" value="P-loop containing nucleoside triphosphate hydrolases"/>
    <property type="match status" value="1"/>
</dbReference>
<dbReference type="SUPFAM" id="SSF48019">
    <property type="entry name" value="post-AAA+ oligomerization domain-like"/>
    <property type="match status" value="1"/>
</dbReference>
<dbReference type="PROSITE" id="PS50172">
    <property type="entry name" value="BRCT"/>
    <property type="match status" value="1"/>
</dbReference>
<accession>Q9C587</accession>
<name>RFC1_ARATH</name>
<feature type="chain" id="PRO_0000422629" description="Replication factor C subunit 1">
    <location>
        <begin position="1"/>
        <end position="956"/>
    </location>
</feature>
<feature type="domain" description="BRCT" evidence="3">
    <location>
        <begin position="202"/>
        <end position="292"/>
    </location>
</feature>
<feature type="region of interest" description="Disordered" evidence="4">
    <location>
        <begin position="1"/>
        <end position="206"/>
    </location>
</feature>
<feature type="region of interest" description="Disordered" evidence="4">
    <location>
        <begin position="286"/>
        <end position="332"/>
    </location>
</feature>
<feature type="region of interest" description="Disordered" evidence="4">
    <location>
        <begin position="858"/>
        <end position="956"/>
    </location>
</feature>
<feature type="compositionally biased region" description="Basic and acidic residues" evidence="4">
    <location>
        <begin position="1"/>
        <end position="15"/>
    </location>
</feature>
<feature type="compositionally biased region" description="Basic and acidic residues" evidence="4">
    <location>
        <begin position="50"/>
        <end position="74"/>
    </location>
</feature>
<feature type="compositionally biased region" description="Gly residues" evidence="4">
    <location>
        <begin position="158"/>
        <end position="183"/>
    </location>
</feature>
<feature type="compositionally biased region" description="Basic and acidic residues" evidence="4">
    <location>
        <begin position="186"/>
        <end position="200"/>
    </location>
</feature>
<feature type="compositionally biased region" description="Basic and acidic residues" evidence="4">
    <location>
        <begin position="288"/>
        <end position="298"/>
    </location>
</feature>
<feature type="compositionally biased region" description="Acidic residues" evidence="4">
    <location>
        <begin position="866"/>
        <end position="892"/>
    </location>
</feature>
<feature type="compositionally biased region" description="Low complexity" evidence="4">
    <location>
        <begin position="916"/>
        <end position="925"/>
    </location>
</feature>
<feature type="binding site" evidence="2">
    <location>
        <begin position="399"/>
        <end position="406"/>
    </location>
    <ligand>
        <name>ATP</name>
        <dbReference type="ChEBI" id="CHEBI:30616"/>
    </ligand>
</feature>
<proteinExistence type="evidence at transcript level"/>
<sequence length="956" mass="104378">MSDIRKWFMKAHEKGNGSAPKSTSSKAGPVKNAAETAPIKSEQASEDLETADRRKTSKYFGKDKTKVKDEKEVEAIPAKRKLKTESDDLVKPRPRKVTKVVDDDDDDFDVPISRKTRDTTPSKKLKSGSGRGIASKTVDNDDDDDGEDKETPLKSAGRGRGGRAAPGASTGGRGRGGGRGGFMNFGERKDPPHKGEKEVPEGTPDCLAGLTFVISGTLDSLEREEAEDLIKRHGGRITGSVSKKTTYLLCDEDIGGRKSEKAKELGTKFLTEDGLFDIIRSSKPVKKSLPERSNKGTEKICAPPKTSPQKEETRGKPLAKSSPKKVPPAKGKNKIIETSLPWTEKYRPKVPNEIVGNQSLVTQLHNWLSHWHDQFGGTGSKGKGKKLNDAGSKKAVLLSGTPGIGKTTSAKLVSQMLGFQAVEVNASDSRGKANSNIAKGIGGSNANSVKELVNNEAMAANFDRSKHPKTVLIMDEVDGMSAGDRGGVADLIASIKISKIPIICICNDRYSQKLKSLVNYCLPLNYRKPTKQQMAKRLMHIAKAEGLEINEIALEELAERVNGDIRLAVNQLQYMSLSMSVIKYDDIRQRLLSSAKDEDISPFTAVDKLFGYNGGKLRMDERIDLSMSDPDLVPLLIQENYLNYRPSGKDEAKRMDLLARAAESIADGDIINVQIRRYRQWQLSQSCCVASSILPASLLHGSREVLEQGERNFNRFGGWLGKNSTAGKNRRLMEDLHVHVLASRESSAGRETLRVDYLPLLLSRLTSPLQTLPKDEAVSEVVDFMNSYSISQEDFDTILELGKFKGRENPMEGVPPPVKAALTKKYNEMNKTRMVRVADMVQLPGVKKAPKKRIAAMLEPTVDSLRDEDGEPLADNEEGNGSDAEEDSEEATDGEKLESNLKNLNARGIQVELDLKGAGSSGSRKAAGKGRGRGKAADTSAEKKATGRGSGAKRKR</sequence>
<organism>
    <name type="scientific">Arabidopsis thaliana</name>
    <name type="common">Mouse-ear cress</name>
    <dbReference type="NCBI Taxonomy" id="3702"/>
    <lineage>
        <taxon>Eukaryota</taxon>
        <taxon>Viridiplantae</taxon>
        <taxon>Streptophyta</taxon>
        <taxon>Embryophyta</taxon>
        <taxon>Tracheophyta</taxon>
        <taxon>Spermatophyta</taxon>
        <taxon>Magnoliopsida</taxon>
        <taxon>eudicotyledons</taxon>
        <taxon>Gunneridae</taxon>
        <taxon>Pentapetalae</taxon>
        <taxon>rosids</taxon>
        <taxon>malvids</taxon>
        <taxon>Brassicales</taxon>
        <taxon>Brassicaceae</taxon>
        <taxon>Camelineae</taxon>
        <taxon>Arabidopsis</taxon>
    </lineage>
</organism>
<keyword id="KW-0067">ATP-binding</keyword>
<keyword id="KW-0227">DNA damage</keyword>
<keyword id="KW-0233">DNA recombination</keyword>
<keyword id="KW-0234">DNA repair</keyword>
<keyword id="KW-0235">DNA replication</keyword>
<keyword id="KW-0238">DNA-binding</keyword>
<keyword id="KW-0469">Meiosis</keyword>
<keyword id="KW-0547">Nucleotide-binding</keyword>
<keyword id="KW-0539">Nucleus</keyword>
<keyword id="KW-1185">Reference proteome</keyword>
<comment type="function">
    <text evidence="5 6 7 8">Plays a role as mediator of transcriptional gene silencing (TGS), DNA replication, DNA repair, hypersensitive response (HR) and telomere length regulation. Is required in meiosis for DNA double-strand break (DSB) repair during meiotic homologous recombination. May participate in the RAD51-mediated recombination intermediate repair process. Is important for lagging strand synthesis. Promotes meiotic recombination via a specific pathway for crossovers (COs) that involves the formation of double Holliday Junction (dHJ) intermediates.</text>
</comment>
<comment type="subunit">
    <text evidence="1">Heterotetramer of subunits RFC2, RFC3, RFC4 and RFC5 that can form a complex with RFC1.</text>
</comment>
<comment type="subcellular location">
    <subcellularLocation>
        <location evidence="6 7">Nucleus</location>
    </subcellularLocation>
    <text>Localizes to the chromosomes during zygotene and pachytene.</text>
</comment>
<comment type="tissue specificity">
    <text evidence="6 7">Expressed at high levels in flowers and siliques, and at lower levels in roots, stems and leaves.</text>
</comment>
<comment type="disruption phenotype">
    <text evidence="5 6 7 8">The rfc1-1 EMS mutants show reduced plant growth and organ size, and early flowering (PubMed:20639449). The rfc1-2 T-DNA mutants have normal vegetative growth, but have greatly reduced fertility due to a meiotic defect and produce short seed pods with very few seeds (PubMed:23144629). The rfc1-3 T-DNA mutant is embryonic lethal when homozygous (PubMed:23144629).</text>
</comment>
<comment type="similarity">
    <text evidence="9">Belongs to the activator 1 large subunit family.</text>
</comment>
<protein>
    <recommendedName>
        <fullName>Replication factor C subunit 1</fullName>
        <shortName>AtRFC1</shortName>
    </recommendedName>
    <alternativeName>
        <fullName>Activator 1 large subunit</fullName>
    </alternativeName>
    <alternativeName>
        <fullName>Activator 1 subunit 1</fullName>
    </alternativeName>
</protein>
<reference key="1">
    <citation type="journal article" date="2000" name="Nature">
        <title>Sequence and analysis of chromosome 5 of the plant Arabidopsis thaliana.</title>
        <authorList>
            <person name="Tabata S."/>
            <person name="Kaneko T."/>
            <person name="Nakamura Y."/>
            <person name="Kotani H."/>
            <person name="Kato T."/>
            <person name="Asamizu E."/>
            <person name="Miyajima N."/>
            <person name="Sasamoto S."/>
            <person name="Kimura T."/>
            <person name="Hosouchi T."/>
            <person name="Kawashima K."/>
            <person name="Kohara M."/>
            <person name="Matsumoto M."/>
            <person name="Matsuno A."/>
            <person name="Muraki A."/>
            <person name="Nakayama S."/>
            <person name="Nakazaki N."/>
            <person name="Naruo K."/>
            <person name="Okumura S."/>
            <person name="Shinpo S."/>
            <person name="Takeuchi C."/>
            <person name="Wada T."/>
            <person name="Watanabe A."/>
            <person name="Yamada M."/>
            <person name="Yasuda M."/>
            <person name="Sato S."/>
            <person name="de la Bastide M."/>
            <person name="Huang E."/>
            <person name="Spiegel L."/>
            <person name="Gnoj L."/>
            <person name="O'Shaughnessy A."/>
            <person name="Preston R."/>
            <person name="Habermann K."/>
            <person name="Murray J."/>
            <person name="Johnson D."/>
            <person name="Rohlfing T."/>
            <person name="Nelson J."/>
            <person name="Stoneking T."/>
            <person name="Pepin K."/>
            <person name="Spieth J."/>
            <person name="Sekhon M."/>
            <person name="Armstrong J."/>
            <person name="Becker M."/>
            <person name="Belter E."/>
            <person name="Cordum H."/>
            <person name="Cordes M."/>
            <person name="Courtney L."/>
            <person name="Courtney W."/>
            <person name="Dante M."/>
            <person name="Du H."/>
            <person name="Edwards J."/>
            <person name="Fryman J."/>
            <person name="Haakensen B."/>
            <person name="Lamar E."/>
            <person name="Latreille P."/>
            <person name="Leonard S."/>
            <person name="Meyer R."/>
            <person name="Mulvaney E."/>
            <person name="Ozersky P."/>
            <person name="Riley A."/>
            <person name="Strowmatt C."/>
            <person name="Wagner-McPherson C."/>
            <person name="Wollam A."/>
            <person name="Yoakum M."/>
            <person name="Bell M."/>
            <person name="Dedhia N."/>
            <person name="Parnell L."/>
            <person name="Shah R."/>
            <person name="Rodriguez M."/>
            <person name="Hoon See L."/>
            <person name="Vil D."/>
            <person name="Baker J."/>
            <person name="Kirchoff K."/>
            <person name="Toth K."/>
            <person name="King L."/>
            <person name="Bahret A."/>
            <person name="Miller B."/>
            <person name="Marra M.A."/>
            <person name="Martienssen R."/>
            <person name="McCombie W.R."/>
            <person name="Wilson R.K."/>
            <person name="Murphy G."/>
            <person name="Bancroft I."/>
            <person name="Volckaert G."/>
            <person name="Wambutt R."/>
            <person name="Duesterhoeft A."/>
            <person name="Stiekema W."/>
            <person name="Pohl T."/>
            <person name="Entian K.-D."/>
            <person name="Terryn N."/>
            <person name="Hartley N."/>
            <person name="Bent E."/>
            <person name="Johnson S."/>
            <person name="Langham S.-A."/>
            <person name="McCullagh B."/>
            <person name="Robben J."/>
            <person name="Grymonprez B."/>
            <person name="Zimmermann W."/>
            <person name="Ramsperger U."/>
            <person name="Wedler H."/>
            <person name="Balke K."/>
            <person name="Wedler E."/>
            <person name="Peters S."/>
            <person name="van Staveren M."/>
            <person name="Dirkse W."/>
            <person name="Mooijman P."/>
            <person name="Klein Lankhorst R."/>
            <person name="Weitzenegger T."/>
            <person name="Bothe G."/>
            <person name="Rose M."/>
            <person name="Hauf J."/>
            <person name="Berneiser S."/>
            <person name="Hempel S."/>
            <person name="Feldpausch M."/>
            <person name="Lamberth S."/>
            <person name="Villarroel R."/>
            <person name="Gielen J."/>
            <person name="Ardiles W."/>
            <person name="Bents O."/>
            <person name="Lemcke K."/>
            <person name="Kolesov G."/>
            <person name="Mayer K.F.X."/>
            <person name="Rudd S."/>
            <person name="Schoof H."/>
            <person name="Schueller C."/>
            <person name="Zaccaria P."/>
            <person name="Mewes H.-W."/>
            <person name="Bevan M."/>
            <person name="Fransz P.F."/>
        </authorList>
    </citation>
    <scope>NUCLEOTIDE SEQUENCE [LARGE SCALE GENOMIC DNA]</scope>
    <source>
        <strain>cv. Columbia</strain>
    </source>
</reference>
<reference key="2">
    <citation type="journal article" date="2017" name="Plant J.">
        <title>Araport11: a complete reannotation of the Arabidopsis thaliana reference genome.</title>
        <authorList>
            <person name="Cheng C.Y."/>
            <person name="Krishnakumar V."/>
            <person name="Chan A.P."/>
            <person name="Thibaud-Nissen F."/>
            <person name="Schobel S."/>
            <person name="Town C.D."/>
        </authorList>
    </citation>
    <scope>GENOME REANNOTATION</scope>
    <source>
        <strain>cv. Columbia</strain>
    </source>
</reference>
<reference key="3">
    <citation type="submission" date="2004-06" db="EMBL/GenBank/DDBJ databases">
        <title>Arabidopsis ORF clones.</title>
        <authorList>
            <person name="Cheuk R.F."/>
            <person name="Chen H."/>
            <person name="Kim C.J."/>
            <person name="Shinn P."/>
            <person name="Ecker J.R."/>
        </authorList>
    </citation>
    <scope>NUCLEOTIDE SEQUENCE [LARGE SCALE MRNA]</scope>
    <source>
        <strain>cv. Columbia</strain>
    </source>
</reference>
<reference key="4">
    <citation type="journal article" date="2007" name="Zhi Wu Sheng Li Yu Fen Zi Sheng Wu Xue Xue Bao">
        <title>Arabidopsis replication factor C subunit 1 plays an important role in embryogenesis.</title>
        <authorList>
            <person name="Xia S.T."/>
            <person name="Xiao L.T."/>
            <person name="Bi D.L."/>
            <person name="Zhu Z.H."/>
        </authorList>
    </citation>
    <scope>FUNCTION</scope>
    <scope>DISRUPTION PHENOTYPE</scope>
</reference>
<reference key="5">
    <citation type="journal article" date="2010" name="Plant Cell">
        <title>DNA replication factor C1 mediates genomic stability and transcriptional gene silencing in Arabidopsis.</title>
        <authorList>
            <person name="Liu Q."/>
            <person name="Wang J."/>
            <person name="Miki D."/>
            <person name="Xia R."/>
            <person name="Yu W."/>
            <person name="He J."/>
            <person name="Zheng Z."/>
            <person name="Zhu J.K."/>
            <person name="Gong Z."/>
        </authorList>
    </citation>
    <scope>FUNCTION</scope>
    <scope>SUBCELLULAR LOCATION</scope>
    <scope>TISSUE SPECIFICITY</scope>
    <scope>DISRUPTION PHENOTYPE</scope>
    <source>
        <strain>cv. C24</strain>
    </source>
</reference>
<reference key="6">
    <citation type="journal article" date="2013" name="Plant J.">
        <title>Replication factor C1 (RFC1) is required for double-strand break repair during meiotic homologous recombination in Arabidopsis.</title>
        <authorList>
            <person name="Liu Y."/>
            <person name="Deng Y."/>
            <person name="Li G."/>
            <person name="Zhao J."/>
        </authorList>
    </citation>
    <scope>FUNCTION</scope>
    <scope>SUBCELLULAR LOCATION</scope>
    <scope>TISSUE SPECIFICITY</scope>
    <scope>DISRUPTION PHENOTYPE</scope>
    <source>
        <strain>cv. Columbia</strain>
    </source>
</reference>
<reference key="7">
    <citation type="journal article" date="2012" name="PLoS Genet.">
        <title>The DNA replication factor RFC1 is required for interference-sensitive meiotic crossovers in Arabidopsis thaliana.</title>
        <authorList>
            <person name="Wang Y."/>
            <person name="Cheng Z."/>
            <person name="Huang J."/>
            <person name="Shi Q."/>
            <person name="Hong Y."/>
            <person name="Copenhaver G.P."/>
            <person name="Gong Z."/>
            <person name="Ma H."/>
        </authorList>
    </citation>
    <scope>FUNCTION</scope>
    <scope>DISRUPTION PHENOTYPE</scope>
</reference>
<evidence type="ECO:0000250" key="1"/>
<evidence type="ECO:0000255" key="2"/>
<evidence type="ECO:0000255" key="3">
    <source>
        <dbReference type="PROSITE-ProRule" id="PRU00033"/>
    </source>
</evidence>
<evidence type="ECO:0000256" key="4">
    <source>
        <dbReference type="SAM" id="MobiDB-lite"/>
    </source>
</evidence>
<evidence type="ECO:0000269" key="5">
    <source>
    </source>
</evidence>
<evidence type="ECO:0000269" key="6">
    <source>
    </source>
</evidence>
<evidence type="ECO:0000269" key="7">
    <source>
    </source>
</evidence>
<evidence type="ECO:0000269" key="8">
    <source>
    </source>
</evidence>
<evidence type="ECO:0000305" key="9"/>
<gene>
    <name type="primary">RFC1</name>
    <name type="ordered locus">At5g22010</name>
    <name type="ORF">T6G21</name>
</gene>